<evidence type="ECO:0000250" key="1"/>
<evidence type="ECO:0000250" key="2">
    <source>
        <dbReference type="UniProtKB" id="O54916"/>
    </source>
</evidence>
<evidence type="ECO:0000255" key="3"/>
<evidence type="ECO:0000255" key="4">
    <source>
        <dbReference type="PROSITE-ProRule" id="PRU00077"/>
    </source>
</evidence>
<evidence type="ECO:0000255" key="5">
    <source>
        <dbReference type="PROSITE-ProRule" id="PRU00448"/>
    </source>
</evidence>
<evidence type="ECO:0000256" key="6">
    <source>
        <dbReference type="SAM" id="MobiDB-lite"/>
    </source>
</evidence>
<evidence type="ECO:0000269" key="7">
    <source>
    </source>
</evidence>
<evidence type="ECO:0000269" key="8">
    <source>
    </source>
</evidence>
<evidence type="ECO:0000269" key="9">
    <source>
    </source>
</evidence>
<evidence type="ECO:0000269" key="10">
    <source>
    </source>
</evidence>
<evidence type="ECO:0000303" key="11">
    <source>
    </source>
</evidence>
<evidence type="ECO:0000303" key="12">
    <source>
    </source>
</evidence>
<evidence type="ECO:0000305" key="13"/>
<evidence type="ECO:0007744" key="14">
    <source>
    </source>
</evidence>
<evidence type="ECO:0007744" key="15">
    <source>
    </source>
</evidence>
<evidence type="ECO:0007744" key="16">
    <source>
    </source>
</evidence>
<evidence type="ECO:0007744" key="17">
    <source>
    </source>
</evidence>
<evidence type="ECO:0007744" key="18">
    <source>
    </source>
</evidence>
<evidence type="ECO:0007744" key="19">
    <source>
    </source>
</evidence>
<evidence type="ECO:0007744" key="20">
    <source>
    </source>
</evidence>
<evidence type="ECO:0007744" key="21">
    <source>
    </source>
</evidence>
<evidence type="ECO:0007744" key="22">
    <source>
    </source>
</evidence>
<reference key="1">
    <citation type="journal article" date="2003" name="Nature">
        <title>The DNA sequence and analysis of human chromosome 6.</title>
        <authorList>
            <person name="Mungall A.J."/>
            <person name="Palmer S.A."/>
            <person name="Sims S.K."/>
            <person name="Edwards C.A."/>
            <person name="Ashurst J.L."/>
            <person name="Wilming L."/>
            <person name="Jones M.C."/>
            <person name="Horton R."/>
            <person name="Hunt S.E."/>
            <person name="Scott C.E."/>
            <person name="Gilbert J.G.R."/>
            <person name="Clamp M.E."/>
            <person name="Bethel G."/>
            <person name="Milne S."/>
            <person name="Ainscough R."/>
            <person name="Almeida J.P."/>
            <person name="Ambrose K.D."/>
            <person name="Andrews T.D."/>
            <person name="Ashwell R.I.S."/>
            <person name="Babbage A.K."/>
            <person name="Bagguley C.L."/>
            <person name="Bailey J."/>
            <person name="Banerjee R."/>
            <person name="Barker D.J."/>
            <person name="Barlow K.F."/>
            <person name="Bates K."/>
            <person name="Beare D.M."/>
            <person name="Beasley H."/>
            <person name="Beasley O."/>
            <person name="Bird C.P."/>
            <person name="Blakey S.E."/>
            <person name="Bray-Allen S."/>
            <person name="Brook J."/>
            <person name="Brown A.J."/>
            <person name="Brown J.Y."/>
            <person name="Burford D.C."/>
            <person name="Burrill W."/>
            <person name="Burton J."/>
            <person name="Carder C."/>
            <person name="Carter N.P."/>
            <person name="Chapman J.C."/>
            <person name="Clark S.Y."/>
            <person name="Clark G."/>
            <person name="Clee C.M."/>
            <person name="Clegg S."/>
            <person name="Cobley V."/>
            <person name="Collier R.E."/>
            <person name="Collins J.E."/>
            <person name="Colman L.K."/>
            <person name="Corby N.R."/>
            <person name="Coville G.J."/>
            <person name="Culley K.M."/>
            <person name="Dhami P."/>
            <person name="Davies J."/>
            <person name="Dunn M."/>
            <person name="Earthrowl M.E."/>
            <person name="Ellington A.E."/>
            <person name="Evans K.A."/>
            <person name="Faulkner L."/>
            <person name="Francis M.D."/>
            <person name="Frankish A."/>
            <person name="Frankland J."/>
            <person name="French L."/>
            <person name="Garner P."/>
            <person name="Garnett J."/>
            <person name="Ghori M.J."/>
            <person name="Gilby L.M."/>
            <person name="Gillson C.J."/>
            <person name="Glithero R.J."/>
            <person name="Grafham D.V."/>
            <person name="Grant M."/>
            <person name="Gribble S."/>
            <person name="Griffiths C."/>
            <person name="Griffiths M.N.D."/>
            <person name="Hall R."/>
            <person name="Halls K.S."/>
            <person name="Hammond S."/>
            <person name="Harley J.L."/>
            <person name="Hart E.A."/>
            <person name="Heath P.D."/>
            <person name="Heathcott R."/>
            <person name="Holmes S.J."/>
            <person name="Howden P.J."/>
            <person name="Howe K.L."/>
            <person name="Howell G.R."/>
            <person name="Huckle E."/>
            <person name="Humphray S.J."/>
            <person name="Humphries M.D."/>
            <person name="Hunt A.R."/>
            <person name="Johnson C.M."/>
            <person name="Joy A.A."/>
            <person name="Kay M."/>
            <person name="Keenan S.J."/>
            <person name="Kimberley A.M."/>
            <person name="King A."/>
            <person name="Laird G.K."/>
            <person name="Langford C."/>
            <person name="Lawlor S."/>
            <person name="Leongamornlert D.A."/>
            <person name="Leversha M."/>
            <person name="Lloyd C.R."/>
            <person name="Lloyd D.M."/>
            <person name="Loveland J.E."/>
            <person name="Lovell J."/>
            <person name="Martin S."/>
            <person name="Mashreghi-Mohammadi M."/>
            <person name="Maslen G.L."/>
            <person name="Matthews L."/>
            <person name="McCann O.T."/>
            <person name="McLaren S.J."/>
            <person name="McLay K."/>
            <person name="McMurray A."/>
            <person name="Moore M.J.F."/>
            <person name="Mullikin J.C."/>
            <person name="Niblett D."/>
            <person name="Nickerson T."/>
            <person name="Novik K.L."/>
            <person name="Oliver K."/>
            <person name="Overton-Larty E.K."/>
            <person name="Parker A."/>
            <person name="Patel R."/>
            <person name="Pearce A.V."/>
            <person name="Peck A.I."/>
            <person name="Phillimore B.J.C.T."/>
            <person name="Phillips S."/>
            <person name="Plumb R.W."/>
            <person name="Porter K.M."/>
            <person name="Ramsey Y."/>
            <person name="Ranby S.A."/>
            <person name="Rice C.M."/>
            <person name="Ross M.T."/>
            <person name="Searle S.M."/>
            <person name="Sehra H.K."/>
            <person name="Sheridan E."/>
            <person name="Skuce C.D."/>
            <person name="Smith S."/>
            <person name="Smith M."/>
            <person name="Spraggon L."/>
            <person name="Squares S.L."/>
            <person name="Steward C.A."/>
            <person name="Sycamore N."/>
            <person name="Tamlyn-Hall G."/>
            <person name="Tester J."/>
            <person name="Theaker A.J."/>
            <person name="Thomas D.W."/>
            <person name="Thorpe A."/>
            <person name="Tracey A."/>
            <person name="Tromans A."/>
            <person name="Tubby B."/>
            <person name="Wall M."/>
            <person name="Wallis J.M."/>
            <person name="West A.P."/>
            <person name="White S.S."/>
            <person name="Whitehead S.L."/>
            <person name="Whittaker H."/>
            <person name="Wild A."/>
            <person name="Willey D.J."/>
            <person name="Wilmer T.E."/>
            <person name="Wood J.M."/>
            <person name="Wray P.W."/>
            <person name="Wyatt J.C."/>
            <person name="Young L."/>
            <person name="Younger R.M."/>
            <person name="Bentley D.R."/>
            <person name="Coulson A."/>
            <person name="Durbin R.M."/>
            <person name="Hubbard T."/>
            <person name="Sulston J.E."/>
            <person name="Dunham I."/>
            <person name="Rogers J."/>
            <person name="Beck S."/>
        </authorList>
    </citation>
    <scope>NUCLEOTIDE SEQUENCE [LARGE SCALE GENOMIC DNA]</scope>
</reference>
<reference key="2">
    <citation type="submission" date="2005-09" db="EMBL/GenBank/DDBJ databases">
        <authorList>
            <person name="Mural R.J."/>
            <person name="Istrail S."/>
            <person name="Sutton G.G."/>
            <person name="Florea L."/>
            <person name="Halpern A.L."/>
            <person name="Mobarry C.M."/>
            <person name="Lippert R."/>
            <person name="Walenz B."/>
            <person name="Shatkay H."/>
            <person name="Dew I."/>
            <person name="Miller J.R."/>
            <person name="Flanigan M.J."/>
            <person name="Edwards N.J."/>
            <person name="Bolanos R."/>
            <person name="Fasulo D."/>
            <person name="Halldorsson B.V."/>
            <person name="Hannenhalli S."/>
            <person name="Turner R."/>
            <person name="Yooseph S."/>
            <person name="Lu F."/>
            <person name="Nusskern D.R."/>
            <person name="Shue B.C."/>
            <person name="Zheng X.H."/>
            <person name="Zhong F."/>
            <person name="Delcher A.L."/>
            <person name="Huson D.H."/>
            <person name="Kravitz S.A."/>
            <person name="Mouchard L."/>
            <person name="Reinert K."/>
            <person name="Remington K.A."/>
            <person name="Clark A.G."/>
            <person name="Waterman M.S."/>
            <person name="Eichler E.E."/>
            <person name="Adams M.D."/>
            <person name="Hunkapiller M.W."/>
            <person name="Myers E.W."/>
            <person name="Venter J.C."/>
        </authorList>
    </citation>
    <scope>NUCLEOTIDE SEQUENCE [LARGE SCALE GENOMIC DNA]</scope>
</reference>
<reference key="3">
    <citation type="journal article" date="2004" name="Genome Res.">
        <title>The status, quality, and expansion of the NIH full-length cDNA project: the Mammalian Gene Collection (MGC).</title>
        <authorList>
            <consortium name="The MGC Project Team"/>
        </authorList>
    </citation>
    <scope>NUCLEOTIDE SEQUENCE [LARGE SCALE MRNA] (ISOFORMS 2 AND 3)</scope>
    <source>
        <tissue>Brain</tissue>
        <tissue>Lymph</tissue>
    </source>
</reference>
<reference key="4">
    <citation type="journal article" date="2006" name="Genome Res.">
        <title>Diversification of transcriptional modulation: large-scale identification and characterization of putative alternative promoters of human genes.</title>
        <authorList>
            <person name="Kimura K."/>
            <person name="Wakamatsu A."/>
            <person name="Suzuki Y."/>
            <person name="Ota T."/>
            <person name="Nishikawa T."/>
            <person name="Yamashita R."/>
            <person name="Yamamoto J."/>
            <person name="Sekine M."/>
            <person name="Tsuritani K."/>
            <person name="Wakaguri H."/>
            <person name="Ishii S."/>
            <person name="Sugiyama T."/>
            <person name="Saito K."/>
            <person name="Isono Y."/>
            <person name="Irie R."/>
            <person name="Kushida N."/>
            <person name="Yoneyama T."/>
            <person name="Otsuka R."/>
            <person name="Kanda K."/>
            <person name="Yokoi T."/>
            <person name="Kondo H."/>
            <person name="Wagatsuma M."/>
            <person name="Murakawa K."/>
            <person name="Ishida S."/>
            <person name="Ishibashi T."/>
            <person name="Takahashi-Fujii A."/>
            <person name="Tanase T."/>
            <person name="Nagai K."/>
            <person name="Kikuchi H."/>
            <person name="Nakai K."/>
            <person name="Isogai T."/>
            <person name="Sugano S."/>
        </authorList>
    </citation>
    <scope>NUCLEOTIDE SEQUENCE [LARGE SCALE MRNA] OF 1-159 (ISOFORM 1)</scope>
    <source>
        <tissue>Uterus</tissue>
    </source>
</reference>
<reference key="5">
    <citation type="journal article" date="2001" name="Biochim. Biophys. Acta">
        <title>Cloning, expression and characterization of a novel human REPS1 gene.</title>
        <authorList>
            <person name="Xu J."/>
            <person name="Zhou Z."/>
            <person name="Zeng L."/>
            <person name="Huang Y."/>
            <person name="Zhao W."/>
            <person name="Cheng C."/>
            <person name="Xu M."/>
            <person name="Xie Y."/>
            <person name="Mao Y."/>
        </authorList>
    </citation>
    <scope>NUCLEOTIDE SEQUENCE [MRNA] OF 22-796 (ISOFORM 1)</scope>
    <scope>TISSUE SPECIFICITY</scope>
    <source>
        <tissue>Fetal brain</tissue>
    </source>
</reference>
<reference key="6">
    <citation type="journal article" date="2007" name="BMC Genomics">
        <title>The full-ORF clone resource of the German cDNA consortium.</title>
        <authorList>
            <person name="Bechtel S."/>
            <person name="Rosenfelder H."/>
            <person name="Duda A."/>
            <person name="Schmidt C.P."/>
            <person name="Ernst U."/>
            <person name="Wellenreuther R."/>
            <person name="Mehrle A."/>
            <person name="Schuster C."/>
            <person name="Bahr A."/>
            <person name="Bloecker H."/>
            <person name="Heubner D."/>
            <person name="Hoerlein A."/>
            <person name="Michel G."/>
            <person name="Wedler H."/>
            <person name="Koehrer K."/>
            <person name="Ottenwaelder B."/>
            <person name="Poustka A."/>
            <person name="Wiemann S."/>
            <person name="Schupp I."/>
        </authorList>
    </citation>
    <scope>NUCLEOTIDE SEQUENCE [LARGE SCALE MRNA] OF 60-796 (ISOFORM 4)</scope>
    <scope>NUCLEOTIDE SEQUENCE [LARGE SCALE MRNA] OF 326-796 (ISOFORM 1)</scope>
    <source>
        <tissue>Brain</tissue>
    </source>
</reference>
<reference key="7">
    <citation type="journal article" date="2002" name="J. Biol. Chem.">
        <title>Rab11-FIP2, an adaptor protein connecting cellular components involved in internalization and recycling of epidermal growth factor receptors.</title>
        <authorList>
            <person name="Cullis D.N."/>
            <person name="Philip B."/>
            <person name="Baleja J.D."/>
            <person name="Feig L.A."/>
        </authorList>
    </citation>
    <scope>INTERACTION WITH RAB11FIP2</scope>
</reference>
<reference key="8">
    <citation type="journal article" date="2006" name="Cell">
        <title>Global, in vivo, and site-specific phosphorylation dynamics in signaling networks.</title>
        <authorList>
            <person name="Olsen J.V."/>
            <person name="Blagoev B."/>
            <person name="Gnad F."/>
            <person name="Macek B."/>
            <person name="Kumar C."/>
            <person name="Mortensen P."/>
            <person name="Mann M."/>
        </authorList>
    </citation>
    <scope>PHOSPHORYLATION [LARGE SCALE ANALYSIS] AT SER-489</scope>
    <scope>IDENTIFICATION BY MASS SPECTROMETRY [LARGE SCALE ANALYSIS]</scope>
    <source>
        <tissue>Cervix carcinoma</tissue>
    </source>
</reference>
<reference key="9">
    <citation type="journal article" date="2008" name="J. Proteome Res.">
        <title>Combining protein-based IMAC, peptide-based IMAC, and MudPIT for efficient phosphoproteomic analysis.</title>
        <authorList>
            <person name="Cantin G.T."/>
            <person name="Yi W."/>
            <person name="Lu B."/>
            <person name="Park S.K."/>
            <person name="Xu T."/>
            <person name="Lee J.-D."/>
            <person name="Yates J.R. III"/>
        </authorList>
    </citation>
    <scope>PHOSPHORYLATION [LARGE SCALE ANALYSIS] AT SER-162 AND SER-170</scope>
    <scope>IDENTIFICATION BY MASS SPECTROMETRY [LARGE SCALE ANALYSIS]</scope>
    <source>
        <tissue>Cervix carcinoma</tissue>
    </source>
</reference>
<reference key="10">
    <citation type="journal article" date="2008" name="J. Proteome Res.">
        <title>Phosphoproteome of resting human platelets.</title>
        <authorList>
            <person name="Zahedi R.P."/>
            <person name="Lewandrowski U."/>
            <person name="Wiesner J."/>
            <person name="Wortelkamp S."/>
            <person name="Moebius J."/>
            <person name="Schuetz C."/>
            <person name="Walter U."/>
            <person name="Gambaryan S."/>
            <person name="Sickmann A."/>
        </authorList>
    </citation>
    <scope>IDENTIFICATION BY MASS SPECTROMETRY [LARGE SCALE ANALYSIS]</scope>
    <source>
        <tissue>Platelet</tissue>
    </source>
</reference>
<reference key="11">
    <citation type="journal article" date="2008" name="Proc. Natl. Acad. Sci. U.S.A.">
        <title>A quantitative atlas of mitotic phosphorylation.</title>
        <authorList>
            <person name="Dephoure N."/>
            <person name="Zhou C."/>
            <person name="Villen J."/>
            <person name="Beausoleil S.A."/>
            <person name="Bakalarski C.E."/>
            <person name="Elledge S.J."/>
            <person name="Gygi S.P."/>
        </authorList>
    </citation>
    <scope>PHOSPHORYLATION [LARGE SCALE ANALYSIS] AT SER-162; SER-166; SER-170 AND SER-307</scope>
    <scope>IDENTIFICATION BY MASS SPECTROMETRY [LARGE SCALE ANALYSIS]</scope>
    <source>
        <tissue>Cervix carcinoma</tissue>
    </source>
</reference>
<reference key="12">
    <citation type="journal article" date="2008" name="Proteomics">
        <title>Large-scale phosphoproteome analysis of human liver tissue by enrichment and fractionation of phosphopeptides with strong anion exchange chromatography.</title>
        <authorList>
            <person name="Han G."/>
            <person name="Ye M."/>
            <person name="Zhou H."/>
            <person name="Jiang X."/>
            <person name="Feng S."/>
            <person name="Jiang X."/>
            <person name="Tian R."/>
            <person name="Wan D."/>
            <person name="Zou H."/>
            <person name="Gu J."/>
        </authorList>
    </citation>
    <scope>PHOSPHORYLATION [LARGE SCALE ANALYSIS] AT SER-709</scope>
    <scope>IDENTIFICATION BY MASS SPECTROMETRY [LARGE SCALE ANALYSIS]</scope>
    <source>
        <tissue>Liver</tissue>
    </source>
</reference>
<reference key="13">
    <citation type="journal article" date="2009" name="Anal. Chem.">
        <title>Lys-N and trypsin cover complementary parts of the phosphoproteome in a refined SCX-based approach.</title>
        <authorList>
            <person name="Gauci S."/>
            <person name="Helbig A.O."/>
            <person name="Slijper M."/>
            <person name="Krijgsveld J."/>
            <person name="Heck A.J."/>
            <person name="Mohammed S."/>
        </authorList>
    </citation>
    <scope>IDENTIFICATION BY MASS SPECTROMETRY [LARGE SCALE ANALYSIS]</scope>
</reference>
<reference key="14">
    <citation type="journal article" date="2009" name="Mol. Cell. Proteomics">
        <title>Large-scale proteomics analysis of the human kinome.</title>
        <authorList>
            <person name="Oppermann F.S."/>
            <person name="Gnad F."/>
            <person name="Olsen J.V."/>
            <person name="Hornberger R."/>
            <person name="Greff Z."/>
            <person name="Keri G."/>
            <person name="Mann M."/>
            <person name="Daub H."/>
        </authorList>
    </citation>
    <scope>IDENTIFICATION BY MASS SPECTROMETRY [LARGE SCALE ANALYSIS]</scope>
</reference>
<reference key="15">
    <citation type="journal article" date="2009" name="Sci. Signal.">
        <title>Quantitative phosphoproteomic analysis of T cell receptor signaling reveals system-wide modulation of protein-protein interactions.</title>
        <authorList>
            <person name="Mayya V."/>
            <person name="Lundgren D.H."/>
            <person name="Hwang S.-I."/>
            <person name="Rezaul K."/>
            <person name="Wu L."/>
            <person name="Eng J.K."/>
            <person name="Rodionov V."/>
            <person name="Han D.K."/>
        </authorList>
    </citation>
    <scope>PHOSPHORYLATION [LARGE SCALE ANALYSIS] AT SER-162; SER-170; THR-173 AND SER-540</scope>
    <scope>IDENTIFICATION BY MASS SPECTROMETRY [LARGE SCALE ANALYSIS]</scope>
    <source>
        <tissue>Leukemic T-cell</tissue>
    </source>
</reference>
<reference key="16">
    <citation type="journal article" date="2010" name="Biochem. Biophys. Res. Commun.">
        <title>Intersectin 1 forms complexes with SGIP1 and Reps1 in clathrin-coated pits.</title>
        <authorList>
            <person name="Dergai O."/>
            <person name="Novokhatska O."/>
            <person name="Dergai M."/>
            <person name="Skrypkina I."/>
            <person name="Tsyba L."/>
            <person name="Moreau J."/>
            <person name="Rynditch A."/>
        </authorList>
    </citation>
    <scope>INTERACTION WITH AMPH; ITSN1 AND SGIP1</scope>
    <scope>SUBCELLULAR LOCATION</scope>
</reference>
<reference key="17">
    <citation type="journal article" date="2010" name="Sci. Signal.">
        <title>Quantitative phosphoproteomics reveals widespread full phosphorylation site occupancy during mitosis.</title>
        <authorList>
            <person name="Olsen J.V."/>
            <person name="Vermeulen M."/>
            <person name="Santamaria A."/>
            <person name="Kumar C."/>
            <person name="Miller M.L."/>
            <person name="Jensen L.J."/>
            <person name="Gnad F."/>
            <person name="Cox J."/>
            <person name="Jensen T.S."/>
            <person name="Nigg E.A."/>
            <person name="Brunak S."/>
            <person name="Mann M."/>
        </authorList>
    </citation>
    <scope>PHOSPHORYLATION [LARGE SCALE ANALYSIS] AT SER-143; SER-562 AND SER-740</scope>
    <scope>IDENTIFICATION BY MASS SPECTROMETRY [LARGE SCALE ANALYSIS]</scope>
    <source>
        <tissue>Cervix carcinoma</tissue>
    </source>
</reference>
<reference key="18">
    <citation type="journal article" date="2011" name="BMC Syst. Biol.">
        <title>Initial characterization of the human central proteome.</title>
        <authorList>
            <person name="Burkard T.R."/>
            <person name="Planyavsky M."/>
            <person name="Kaupe I."/>
            <person name="Breitwieser F.P."/>
            <person name="Buerckstuemmer T."/>
            <person name="Bennett K.L."/>
            <person name="Superti-Furga G."/>
            <person name="Colinge J."/>
        </authorList>
    </citation>
    <scope>IDENTIFICATION BY MASS SPECTROMETRY [LARGE SCALE ANALYSIS]</scope>
</reference>
<reference key="19">
    <citation type="journal article" date="2011" name="Sci. Signal.">
        <title>System-wide temporal characterization of the proteome and phosphoproteome of human embryonic stem cell differentiation.</title>
        <authorList>
            <person name="Rigbolt K.T."/>
            <person name="Prokhorova T.A."/>
            <person name="Akimov V."/>
            <person name="Henningsen J."/>
            <person name="Johansen P.T."/>
            <person name="Kratchmarova I."/>
            <person name="Kassem M."/>
            <person name="Mann M."/>
            <person name="Olsen J.V."/>
            <person name="Blagoev B."/>
        </authorList>
    </citation>
    <scope>PHOSPHORYLATION [LARGE SCALE ANALYSIS] AT SER-145; SER-170; SER-562 AND SER-709</scope>
    <scope>IDENTIFICATION BY MASS SPECTROMETRY [LARGE SCALE ANALYSIS]</scope>
</reference>
<reference key="20">
    <citation type="journal article" date="2013" name="J. Proteome Res.">
        <title>Toward a comprehensive characterization of a human cancer cell phosphoproteome.</title>
        <authorList>
            <person name="Zhou H."/>
            <person name="Di Palma S."/>
            <person name="Preisinger C."/>
            <person name="Peng M."/>
            <person name="Polat A.N."/>
            <person name="Heck A.J."/>
            <person name="Mohammed S."/>
        </authorList>
    </citation>
    <scope>PHOSPHORYLATION [LARGE SCALE ANALYSIS] AT SER-170; SER-272; SER-273; SER-307; SER-475; SER-482 AND SER-709</scope>
    <scope>IDENTIFICATION BY MASS SPECTROMETRY [LARGE SCALE ANALYSIS]</scope>
    <source>
        <tissue>Cervix carcinoma</tissue>
        <tissue>Erythroleukemia</tissue>
    </source>
</reference>
<reference key="21">
    <citation type="journal article" date="2014" name="J. Proteomics">
        <title>An enzyme assisted RP-RPLC approach for in-depth analysis of human liver phosphoproteome.</title>
        <authorList>
            <person name="Bian Y."/>
            <person name="Song C."/>
            <person name="Cheng K."/>
            <person name="Dong M."/>
            <person name="Wang F."/>
            <person name="Huang J."/>
            <person name="Sun D."/>
            <person name="Wang L."/>
            <person name="Ye M."/>
            <person name="Zou H."/>
        </authorList>
    </citation>
    <scope>PHOSPHORYLATION [LARGE SCALE ANALYSIS] AT SER-166; SER-170; THR-173; SER-272 AND SER-709</scope>
    <scope>IDENTIFICATION BY MASS SPECTROMETRY [LARGE SCALE ANALYSIS]</scope>
    <source>
        <tissue>Liver</tissue>
    </source>
</reference>
<reference key="22">
    <citation type="journal article" date="2018" name="Am. J. Hum. Genet.">
        <title>Impaired Transferrin Receptor Palmitoylation and Recycling in Neurodegeneration with Brain Iron Accumulation.</title>
        <authorList>
            <person name="Drecourt A."/>
            <person name="Babdor J."/>
            <person name="Dussiot M."/>
            <person name="Petit F."/>
            <person name="Goudin N."/>
            <person name="Garfa-Traore M."/>
            <person name="Habarou F."/>
            <person name="Bole-Feysot C."/>
            <person name="Nitschke P."/>
            <person name="Ottolenghi C."/>
            <person name="Metodiev M.D."/>
            <person name="Serre V."/>
            <person name="Desguerre I."/>
            <person name="Boddaert N."/>
            <person name="Hermine O."/>
            <person name="Munnich A."/>
            <person name="Roetig A."/>
        </authorList>
    </citation>
    <scope>INVOLVEMENT IN NBIA7</scope>
    <scope>VARIANTS NBIA7 LEU-78 AND GLU-113</scope>
    <scope>CHARACTERIZATION OF VARIANTS NBIA7 LEU-78 AND GLU-113</scope>
</reference>
<proteinExistence type="evidence at protein level"/>
<feature type="chain" id="PRO_0000073829" description="RalBP1-associated Eps domain-containing protein 1">
    <location>
        <begin position="1"/>
        <end position="796"/>
    </location>
</feature>
<feature type="domain" description="EH 1" evidence="4">
    <location>
        <begin position="10"/>
        <end position="113"/>
    </location>
</feature>
<feature type="domain" description="EH 2" evidence="4">
    <location>
        <begin position="285"/>
        <end position="374"/>
    </location>
</feature>
<feature type="domain" description="EF-hand" evidence="5">
    <location>
        <begin position="318"/>
        <end position="353"/>
    </location>
</feature>
<feature type="region of interest" description="Disordered" evidence="6">
    <location>
        <begin position="105"/>
        <end position="237"/>
    </location>
</feature>
<feature type="region of interest" description="Disordered" evidence="6">
    <location>
        <begin position="377"/>
        <end position="433"/>
    </location>
</feature>
<feature type="region of interest" description="Disordered" evidence="6">
    <location>
        <begin position="506"/>
        <end position="624"/>
    </location>
</feature>
<feature type="region of interest" description="Disordered" evidence="6">
    <location>
        <begin position="638"/>
        <end position="725"/>
    </location>
</feature>
<feature type="region of interest" description="Interaction with RALBP1" evidence="1">
    <location>
        <begin position="652"/>
        <end position="796"/>
    </location>
</feature>
<feature type="coiled-coil region" evidence="3">
    <location>
        <begin position="751"/>
        <end position="791"/>
    </location>
</feature>
<feature type="compositionally biased region" description="Polar residues" evidence="6">
    <location>
        <begin position="115"/>
        <end position="126"/>
    </location>
</feature>
<feature type="compositionally biased region" description="Polar residues" evidence="6">
    <location>
        <begin position="145"/>
        <end position="156"/>
    </location>
</feature>
<feature type="compositionally biased region" description="Polar residues" evidence="6">
    <location>
        <begin position="407"/>
        <end position="433"/>
    </location>
</feature>
<feature type="compositionally biased region" description="Polar residues" evidence="6">
    <location>
        <begin position="506"/>
        <end position="543"/>
    </location>
</feature>
<feature type="compositionally biased region" description="Pro residues" evidence="6">
    <location>
        <begin position="544"/>
        <end position="554"/>
    </location>
</feature>
<feature type="compositionally biased region" description="Polar residues" evidence="6">
    <location>
        <begin position="563"/>
        <end position="574"/>
    </location>
</feature>
<feature type="compositionally biased region" description="Low complexity" evidence="6">
    <location>
        <begin position="575"/>
        <end position="584"/>
    </location>
</feature>
<feature type="compositionally biased region" description="Pro residues" evidence="6">
    <location>
        <begin position="585"/>
        <end position="596"/>
    </location>
</feature>
<feature type="compositionally biased region" description="Polar residues" evidence="6">
    <location>
        <begin position="612"/>
        <end position="623"/>
    </location>
</feature>
<feature type="compositionally biased region" description="Basic and acidic residues" evidence="6">
    <location>
        <begin position="671"/>
        <end position="681"/>
    </location>
</feature>
<feature type="compositionally biased region" description="Basic and acidic residues" evidence="6">
    <location>
        <begin position="708"/>
        <end position="722"/>
    </location>
</feature>
<feature type="binding site" evidence="5">
    <location>
        <position position="331"/>
    </location>
    <ligand>
        <name>Ca(2+)</name>
        <dbReference type="ChEBI" id="CHEBI:29108"/>
    </ligand>
</feature>
<feature type="binding site" evidence="5">
    <location>
        <position position="333"/>
    </location>
    <ligand>
        <name>Ca(2+)</name>
        <dbReference type="ChEBI" id="CHEBI:29108"/>
    </ligand>
</feature>
<feature type="binding site" evidence="5">
    <location>
        <position position="335"/>
    </location>
    <ligand>
        <name>Ca(2+)</name>
        <dbReference type="ChEBI" id="CHEBI:29108"/>
    </ligand>
</feature>
<feature type="binding site" evidence="5">
    <location>
        <position position="342"/>
    </location>
    <ligand>
        <name>Ca(2+)</name>
        <dbReference type="ChEBI" id="CHEBI:29108"/>
    </ligand>
</feature>
<feature type="modified residue" description="Phosphoserine" evidence="19">
    <location>
        <position position="143"/>
    </location>
</feature>
<feature type="modified residue" description="Phosphoserine" evidence="20">
    <location>
        <position position="145"/>
    </location>
</feature>
<feature type="modified residue" description="Phosphoserine" evidence="15 17 18">
    <location>
        <position position="162"/>
    </location>
</feature>
<feature type="modified residue" description="Phosphoserine" evidence="17 22">
    <location>
        <position position="166"/>
    </location>
</feature>
<feature type="modified residue" description="Phosphoserine" evidence="15 17 18 20 21 22">
    <location>
        <position position="170"/>
    </location>
</feature>
<feature type="modified residue" description="Phosphothreonine" evidence="18 22">
    <location>
        <position position="173"/>
    </location>
</feature>
<feature type="modified residue" description="Phosphoserine" evidence="21 22">
    <location>
        <position position="272"/>
    </location>
</feature>
<feature type="modified residue" description="Phosphoserine" evidence="21">
    <location>
        <position position="273"/>
    </location>
</feature>
<feature type="modified residue" description="Phosphotyrosine" evidence="3">
    <location>
        <position position="288"/>
    </location>
</feature>
<feature type="modified residue" description="Phosphoserine" evidence="17 21">
    <location>
        <position position="307"/>
    </location>
</feature>
<feature type="modified residue" description="Phosphoserine" evidence="21">
    <location>
        <position position="475"/>
    </location>
</feature>
<feature type="modified residue" description="Phosphoserine" evidence="21">
    <location>
        <position position="482"/>
    </location>
</feature>
<feature type="modified residue" description="Phosphoserine" evidence="14">
    <location>
        <position position="489"/>
    </location>
</feature>
<feature type="modified residue" description="Phosphoserine" evidence="18">
    <location>
        <position position="540"/>
    </location>
</feature>
<feature type="modified residue" description="Phosphothreonine" evidence="2">
    <location>
        <position position="544"/>
    </location>
</feature>
<feature type="modified residue" description="Phosphoserine" evidence="19 20">
    <location>
        <position position="562"/>
    </location>
</feature>
<feature type="modified residue" description="Phosphoserine" evidence="16 20 21 22">
    <location>
        <position position="709"/>
    </location>
</feature>
<feature type="modified residue" description="Phosphoserine" evidence="19">
    <location>
        <position position="740"/>
    </location>
</feature>
<feature type="splice variant" id="VSP_007953" description="In isoform 2 and isoform 4." evidence="11 12">
    <location>
        <begin position="420"/>
        <end position="446"/>
    </location>
</feature>
<feature type="splice variant" id="VSP_007954" description="In isoform 2." evidence="11">
    <location>
        <begin position="510"/>
        <end position="573"/>
    </location>
</feature>
<feature type="splice variant" id="VSP_007955" description="In isoform 3." evidence="11">
    <location>
        <position position="510"/>
    </location>
</feature>
<feature type="sequence variant" id="VAR_080634" description="In NBIA7; primary fibroblasts from patients, who are compound heterozygous with E-113, show much higher intracellular iron content than fibroblasts from control individuals and abnormally elevated levels of transferrin receptor 1/TFRC at the cell surface; dbSNP:rs1554292444." evidence="10">
    <original>V</original>
    <variation>L</variation>
    <location>
        <position position="78"/>
    </location>
</feature>
<feature type="sequence variant" id="VAR_080635" description="In NBIA7; primary fibroblasts from patients, who are compound heterozygous with L-78, show much higher intracellular iron content than fibroblasts from control individuals and abnormally elevated levels of transferrin receptor 1/TFRC at the cell surface; dbSNP:rs201191394." evidence="10">
    <original>A</original>
    <variation>E</variation>
    <location>
        <position position="113"/>
    </location>
</feature>
<feature type="sequence conflict" description="In Ref. 5; AAK34942." evidence="13" ref="5">
    <original>A</original>
    <variation>V</variation>
    <location>
        <position position="628"/>
    </location>
</feature>
<feature type="sequence conflict" description="In Ref. 6; CAD38569." evidence="13" ref="6">
    <original>V</original>
    <variation>I</variation>
    <location>
        <position position="717"/>
    </location>
</feature>
<feature type="sequence conflict" description="In Ref. 3; AAH12764." evidence="13" ref="3">
    <original>SH</original>
    <variation>FP</variation>
    <location>
        <begin position="794"/>
        <end position="795"/>
    </location>
</feature>
<protein>
    <recommendedName>
        <fullName>RalBP1-associated Eps domain-containing protein 1</fullName>
    </recommendedName>
    <alternativeName>
        <fullName>RalBP1-interacting protein 1</fullName>
    </alternativeName>
</protein>
<sequence length="796" mass="86662">MEGLTLSDAEQKYYSDLFSYCDIESTKKVVVNGRVLELFRAAQLPNDVVLQIMELCGATRLGYFGRSQFYIALKLVAVAQSGFPLRVESINTVKDLPLPRFVASKNEQESRHAASYSSDSENQGSYSGVIPPPPGRGQVKKGSVSHDTVQPRTSADAQEPASPVVSPQQSPPTSPHTWRKHSRHPSGGNSERPLAGPGPFWSPFGEAQSGSSAGDAVWSGHSPPPPQENWVSFADTPPTSTLLTMHPASVQDQTTVRTVASATTAIEIRRQSSSYDDPWKITDEQRQYYVNQFKTIQPDLNGFIPGSAAKEFFTKSKLPILELSHIWELSDFDKDGALTLDEFCAAFHLVVARKNGYDLPEKLPESLMPKLIDLEDSADVGDQPGEVGYSGSPAEAPPSKSPSMPSLNQTWPELNQSSEQWETFSERSSSSQTLTQFDSNIAPADPDTAIVHPVPIRMTPSKIHMQEMELKRTGSDHTNPTSPLLVKPSDLLEENKINSSVKFASGNTVADGYSSSDSFTSDPEQIGSNVTRQRSHSGTSPDNTAPPPPPPRPQPSHSRSSSLDMNRTFTVTTGQQQAGVVAHPPAVPPRPQPSQAPGPAVHRPVDADGLITHTSTSPQQIPEQPNFADFSQFEVFAASNVNDEQDDEAEKHPEVLPAEKASDPASSLRVAKTDSKTEEKTAASAPANVSKGTTPLAPPPKPVRRRLKSEDELRPEVDEHTQKTGVLAAVLASQPSIPRSVGKDKKAIQASIRRNKETNTVLARLNSELQQQLKDVLEERISLEVQLEQLRPFSHL</sequence>
<gene>
    <name type="primary">REPS1</name>
</gene>
<keyword id="KW-0025">Alternative splicing</keyword>
<keyword id="KW-0106">Calcium</keyword>
<keyword id="KW-0168">Coated pit</keyword>
<keyword id="KW-0175">Coiled coil</keyword>
<keyword id="KW-0225">Disease variant</keyword>
<keyword id="KW-0472">Membrane</keyword>
<keyword id="KW-0479">Metal-binding</keyword>
<keyword id="KW-0523">Neurodegeneration</keyword>
<keyword id="KW-0597">Phosphoprotein</keyword>
<keyword id="KW-1267">Proteomics identification</keyword>
<keyword id="KW-1185">Reference proteome</keyword>
<keyword id="KW-0677">Repeat</keyword>
<organism>
    <name type="scientific">Homo sapiens</name>
    <name type="common">Human</name>
    <dbReference type="NCBI Taxonomy" id="9606"/>
    <lineage>
        <taxon>Eukaryota</taxon>
        <taxon>Metazoa</taxon>
        <taxon>Chordata</taxon>
        <taxon>Craniata</taxon>
        <taxon>Vertebrata</taxon>
        <taxon>Euteleostomi</taxon>
        <taxon>Mammalia</taxon>
        <taxon>Eutheria</taxon>
        <taxon>Euarchontoglires</taxon>
        <taxon>Primates</taxon>
        <taxon>Haplorrhini</taxon>
        <taxon>Catarrhini</taxon>
        <taxon>Hominidae</taxon>
        <taxon>Homo</taxon>
    </lineage>
</organism>
<accession>Q96D71</accession>
<accession>B7ZBZ8</accession>
<accession>B7ZBZ9</accession>
<accession>B7ZC00</accession>
<accession>J3KP76</accession>
<accession>Q5JWJ5</accession>
<accession>Q5JWJ6</accession>
<accession>Q5JWJ7</accession>
<accession>Q8NDR7</accession>
<accession>Q8WU62</accession>
<accession>Q9BXY9</accession>
<name>REPS1_HUMAN</name>
<comment type="function">
    <text evidence="1">May coordinate the cellular actions of activated EGF receptors and Ral-GTPases.</text>
</comment>
<comment type="subunit">
    <text evidence="1 8 9 13">Homodimer (Potential). Interacts with RAB11FIP2. Interacts with RALBP1, CRK and GRB2. Binding to RALBP1 does not affect its Ral-binding activity. Forms a complex with the SH3 domains of CRK and GRB2 which may link it to an EGF-responsive tyrosine kinase (By similarity). Interacts with AMPH, ITSN1 (via SH3 domains) and SGIP1; may be involved in clathrin-mediated endocytosis.</text>
</comment>
<comment type="interaction">
    <interactant intactId="EBI-1171195">
        <id>Q96D71</id>
    </interactant>
    <interactant intactId="EBI-915016">
        <id>P49757</id>
        <label>NUMB</label>
    </interactant>
    <organismsDiffer>false</organismsDiffer>
    <experiments>3</experiments>
</comment>
<comment type="interaction">
    <interactant intactId="EBI-1171195">
        <id>Q96D71</id>
    </interactant>
    <interactant intactId="EBI-749285">
        <id>Q15311</id>
        <label>RALBP1</label>
    </interactant>
    <organismsDiffer>false</organismsDiffer>
    <experiments>8</experiments>
</comment>
<comment type="interaction">
    <interactant intactId="EBI-1171195">
        <id>Q96D71</id>
    </interactant>
    <interactant intactId="EBI-9547433">
        <id>Q9QZS3-1</id>
        <label>Numb</label>
    </interactant>
    <organismsDiffer>true</organismsDiffer>
    <experiments>3</experiments>
</comment>
<comment type="interaction">
    <interactant intactId="EBI-1171195">
        <id>Q96D71</id>
    </interactant>
    <interactant intactId="EBI-3896014">
        <id>Q9QZS3-2</id>
        <label>Numb</label>
    </interactant>
    <organismsDiffer>true</organismsDiffer>
    <experiments>2</experiments>
</comment>
<comment type="interaction">
    <interactant intactId="EBI-10284498">
        <id>Q96D71-2</id>
    </interactant>
    <interactant intactId="EBI-747601">
        <id>Q9UL33</id>
        <label>TRAPPC2L</label>
    </interactant>
    <organismsDiffer>false</organismsDiffer>
    <experiments>3</experiments>
</comment>
<comment type="interaction">
    <interactant intactId="EBI-10284512">
        <id>Q96D71-3</id>
    </interactant>
    <interactant intactId="EBI-747601">
        <id>Q9UL33</id>
        <label>TRAPPC2L</label>
    </interactant>
    <organismsDiffer>false</organismsDiffer>
    <experiments>3</experiments>
</comment>
<comment type="subcellular location">
    <subcellularLocation>
        <location evidence="9">Membrane</location>
        <location evidence="9">Clathrin-coated pit</location>
    </subcellularLocation>
    <text>Colocalize with ITSN1 at the plasma membrane in structures that are most probably clathrin-coated pits.</text>
</comment>
<comment type="alternative products">
    <event type="alternative splicing"/>
    <isoform>
        <id>Q96D71-1</id>
        <name>1</name>
        <sequence type="displayed"/>
    </isoform>
    <isoform>
        <id>Q96D71-2</id>
        <name>2</name>
        <sequence type="described" ref="VSP_007953 VSP_007954"/>
    </isoform>
    <isoform>
        <id>Q96D71-3</id>
        <name>3</name>
        <sequence type="described" ref="VSP_007955"/>
    </isoform>
    <isoform>
        <id>Q96D71-4</id>
        <name>4</name>
        <sequence type="described" ref="VSP_007953"/>
    </isoform>
</comment>
<comment type="tissue specificity">
    <text evidence="7">Widely expressed with highest levels in heart and testis.</text>
</comment>
<comment type="PTM">
    <text evidence="1">EGF stimulates phosphorylation on Tyr-residues.</text>
</comment>
<comment type="disease" evidence="10">
    <disease id="DI-05217">
        <name>Neurodegeneration with brain iron accumulation 7</name>
        <acronym>NBIA7</acronym>
        <description>A neurodegenerative disorder associated with iron accumulation, primarily in the basal ganglia. Clinical features include speech and motor delay, truncal hypotonia, progressive cerebellar ataxia, and loss of ambulation. NBIA7 transmission pattern is consistent with autosomal recessive inheritance.</description>
        <dbReference type="MIM" id="617916"/>
    </disease>
    <text>The disease is caused by variants affecting the gene represented in this entry.</text>
</comment>
<comment type="sequence caution" evidence="13">
    <conflict type="erroneous initiation">
        <sequence resource="EMBL-CDS" id="AAH12764"/>
    </conflict>
    <text>Truncated N-terminus.</text>
</comment>
<comment type="sequence caution" evidence="13">
    <conflict type="erroneous initiation">
        <sequence resource="EMBL-CDS" id="AAH21211"/>
    </conflict>
    <text>Truncated N-terminus.</text>
</comment>
<comment type="sequence caution" evidence="13">
    <conflict type="erroneous initiation">
        <sequence resource="EMBL-CDS" id="AAK34942"/>
    </conflict>
    <text>Truncated N-terminus.</text>
</comment>
<dbReference type="EMBL" id="AL121834">
    <property type="status" value="NOT_ANNOTATED_CDS"/>
    <property type="molecule type" value="Genomic_DNA"/>
</dbReference>
<dbReference type="EMBL" id="AL590308">
    <property type="status" value="NOT_ANNOTATED_CDS"/>
    <property type="molecule type" value="Genomic_DNA"/>
</dbReference>
<dbReference type="EMBL" id="AL591033">
    <property type="status" value="NOT_ANNOTATED_CDS"/>
    <property type="molecule type" value="Genomic_DNA"/>
</dbReference>
<dbReference type="EMBL" id="CH471051">
    <property type="protein sequence ID" value="EAW47904.1"/>
    <property type="molecule type" value="Genomic_DNA"/>
</dbReference>
<dbReference type="EMBL" id="CH471051">
    <property type="protein sequence ID" value="EAW47906.1"/>
    <property type="molecule type" value="Genomic_DNA"/>
</dbReference>
<dbReference type="EMBL" id="CH471051">
    <property type="protein sequence ID" value="EAW47907.1"/>
    <property type="molecule type" value="Genomic_DNA"/>
</dbReference>
<dbReference type="EMBL" id="BC012764">
    <property type="protein sequence ID" value="AAH12764.1"/>
    <property type="status" value="ALT_INIT"/>
    <property type="molecule type" value="mRNA"/>
</dbReference>
<dbReference type="EMBL" id="BC021211">
    <property type="protein sequence ID" value="AAH21211.1"/>
    <property type="status" value="ALT_INIT"/>
    <property type="molecule type" value="mRNA"/>
</dbReference>
<dbReference type="EMBL" id="DB263697">
    <property type="status" value="NOT_ANNOTATED_CDS"/>
    <property type="molecule type" value="mRNA"/>
</dbReference>
<dbReference type="EMBL" id="AF251052">
    <property type="protein sequence ID" value="AAK34942.1"/>
    <property type="status" value="ALT_INIT"/>
    <property type="molecule type" value="mRNA"/>
</dbReference>
<dbReference type="EMBL" id="AL832307">
    <property type="status" value="NOT_ANNOTATED_CDS"/>
    <property type="molecule type" value="mRNA"/>
</dbReference>
<dbReference type="EMBL" id="AL831900">
    <property type="protein sequence ID" value="CAD38569.1"/>
    <property type="molecule type" value="mRNA"/>
</dbReference>
<dbReference type="CCDS" id="CCDS47488.1">
    <molecule id="Q96D71-4"/>
</dbReference>
<dbReference type="CCDS" id="CCDS5193.2">
    <molecule id="Q96D71-3"/>
</dbReference>
<dbReference type="CCDS" id="CCDS69212.1">
    <molecule id="Q96D71-2"/>
</dbReference>
<dbReference type="CCDS" id="CCDS69213.1">
    <molecule id="Q96D71-1"/>
</dbReference>
<dbReference type="RefSeq" id="NP_001122089.1">
    <molecule id="Q96D71-4"/>
    <property type="nucleotide sequence ID" value="NM_001128617.3"/>
</dbReference>
<dbReference type="RefSeq" id="NP_001273540.1">
    <molecule id="Q96D71-1"/>
    <property type="nucleotide sequence ID" value="NM_001286611.2"/>
</dbReference>
<dbReference type="RefSeq" id="NP_001273541.1">
    <molecule id="Q96D71-2"/>
    <property type="nucleotide sequence ID" value="NM_001286612.2"/>
</dbReference>
<dbReference type="RefSeq" id="NP_114128.3">
    <molecule id="Q96D71-3"/>
    <property type="nucleotide sequence ID" value="NM_031922.4"/>
</dbReference>
<dbReference type="BMRB" id="Q96D71"/>
<dbReference type="SMR" id="Q96D71"/>
<dbReference type="BioGRID" id="124433">
    <property type="interactions" value="103"/>
</dbReference>
<dbReference type="FunCoup" id="Q96D71">
    <property type="interactions" value="3770"/>
</dbReference>
<dbReference type="IntAct" id="Q96D71">
    <property type="interactions" value="72"/>
</dbReference>
<dbReference type="MINT" id="Q96D71"/>
<dbReference type="STRING" id="9606.ENSP00000392065"/>
<dbReference type="GlyCosmos" id="Q96D71">
    <property type="glycosylation" value="2 sites, 1 glycan"/>
</dbReference>
<dbReference type="GlyGen" id="Q96D71">
    <property type="glycosylation" value="2 sites, 1 O-linked glycan (2 sites)"/>
</dbReference>
<dbReference type="iPTMnet" id="Q96D71"/>
<dbReference type="PhosphoSitePlus" id="Q96D71"/>
<dbReference type="BioMuta" id="REPS1"/>
<dbReference type="DMDM" id="262527572"/>
<dbReference type="jPOST" id="Q96D71"/>
<dbReference type="MassIVE" id="Q96D71"/>
<dbReference type="PaxDb" id="9606-ENSP00000392065"/>
<dbReference type="PeptideAtlas" id="Q96D71"/>
<dbReference type="ProteomicsDB" id="76256">
    <molecule id="Q96D71-1"/>
</dbReference>
<dbReference type="ProteomicsDB" id="76257">
    <molecule id="Q96D71-2"/>
</dbReference>
<dbReference type="ProteomicsDB" id="76258">
    <molecule id="Q96D71-3"/>
</dbReference>
<dbReference type="Pumba" id="Q96D71"/>
<dbReference type="Antibodypedia" id="33064">
    <property type="antibodies" value="115 antibodies from 25 providers"/>
</dbReference>
<dbReference type="DNASU" id="85021"/>
<dbReference type="Ensembl" id="ENST00000258062.9">
    <molecule id="Q96D71-3"/>
    <property type="protein sequence ID" value="ENSP00000258062.5"/>
    <property type="gene ID" value="ENSG00000135597.19"/>
</dbReference>
<dbReference type="Ensembl" id="ENST00000367663.8">
    <molecule id="Q96D71-4"/>
    <property type="protein sequence ID" value="ENSP00000356635.4"/>
    <property type="gene ID" value="ENSG00000135597.19"/>
</dbReference>
<dbReference type="Ensembl" id="ENST00000409812.6">
    <molecule id="Q96D71-2"/>
    <property type="protein sequence ID" value="ENSP00000386699.2"/>
    <property type="gene ID" value="ENSG00000135597.19"/>
</dbReference>
<dbReference type="Ensembl" id="ENST00000450536.7">
    <molecule id="Q96D71-1"/>
    <property type="protein sequence ID" value="ENSP00000392065.2"/>
    <property type="gene ID" value="ENSG00000135597.19"/>
</dbReference>
<dbReference type="GeneID" id="85021"/>
<dbReference type="KEGG" id="hsa:85021"/>
<dbReference type="MANE-Select" id="ENST00000450536.7">
    <property type="protein sequence ID" value="ENSP00000392065.2"/>
    <property type="RefSeq nucleotide sequence ID" value="NM_001286611.2"/>
    <property type="RefSeq protein sequence ID" value="NP_001273540.1"/>
</dbReference>
<dbReference type="UCSC" id="uc003qig.6">
    <molecule id="Q96D71-1"/>
    <property type="organism name" value="human"/>
</dbReference>
<dbReference type="AGR" id="HGNC:15578"/>
<dbReference type="CTD" id="85021"/>
<dbReference type="DisGeNET" id="85021"/>
<dbReference type="GeneCards" id="REPS1"/>
<dbReference type="HGNC" id="HGNC:15578">
    <property type="gene designation" value="REPS1"/>
</dbReference>
<dbReference type="HPA" id="ENSG00000135597">
    <property type="expression patterns" value="Low tissue specificity"/>
</dbReference>
<dbReference type="MalaCards" id="REPS1"/>
<dbReference type="MIM" id="614825">
    <property type="type" value="gene"/>
</dbReference>
<dbReference type="MIM" id="617916">
    <property type="type" value="phenotype"/>
</dbReference>
<dbReference type="neXtProt" id="NX_Q96D71"/>
<dbReference type="OpenTargets" id="ENSG00000135597"/>
<dbReference type="PharmGKB" id="PA34329"/>
<dbReference type="VEuPathDB" id="HostDB:ENSG00000135597"/>
<dbReference type="eggNOG" id="KOG1955">
    <property type="taxonomic scope" value="Eukaryota"/>
</dbReference>
<dbReference type="GeneTree" id="ENSGT00940000158749"/>
<dbReference type="InParanoid" id="Q96D71"/>
<dbReference type="OMA" id="QCCDVEN"/>
<dbReference type="OrthoDB" id="10045710at2759"/>
<dbReference type="PAN-GO" id="Q96D71">
    <property type="GO annotations" value="4 GO annotations based on evolutionary models"/>
</dbReference>
<dbReference type="PhylomeDB" id="Q96D71"/>
<dbReference type="TreeFam" id="TF316546"/>
<dbReference type="PathwayCommons" id="Q96D71"/>
<dbReference type="Reactome" id="R-HSA-8856825">
    <property type="pathway name" value="Cargo recognition for clathrin-mediated endocytosis"/>
</dbReference>
<dbReference type="Reactome" id="R-HSA-8856828">
    <property type="pathway name" value="Clathrin-mediated endocytosis"/>
</dbReference>
<dbReference type="SignaLink" id="Q96D71"/>
<dbReference type="BioGRID-ORCS" id="85021">
    <property type="hits" value="31 hits in 1152 CRISPR screens"/>
</dbReference>
<dbReference type="ChiTaRS" id="REPS1">
    <property type="organism name" value="human"/>
</dbReference>
<dbReference type="GeneWiki" id="REPS1"/>
<dbReference type="GenomeRNAi" id="85021"/>
<dbReference type="Pharos" id="Q96D71">
    <property type="development level" value="Tbio"/>
</dbReference>
<dbReference type="PRO" id="PR:Q96D71"/>
<dbReference type="Proteomes" id="UP000005640">
    <property type="component" value="Chromosome 6"/>
</dbReference>
<dbReference type="RNAct" id="Q96D71">
    <property type="molecule type" value="protein"/>
</dbReference>
<dbReference type="Bgee" id="ENSG00000135597">
    <property type="expression patterns" value="Expressed in ventricular zone and 174 other cell types or tissues"/>
</dbReference>
<dbReference type="ExpressionAtlas" id="Q96D71">
    <property type="expression patterns" value="baseline and differential"/>
</dbReference>
<dbReference type="GO" id="GO:0005905">
    <property type="term" value="C:clathrin-coated pit"/>
    <property type="evidence" value="ECO:0000314"/>
    <property type="project" value="UniProtKB"/>
</dbReference>
<dbReference type="GO" id="GO:0005737">
    <property type="term" value="C:cytoplasm"/>
    <property type="evidence" value="ECO:0000318"/>
    <property type="project" value="GO_Central"/>
</dbReference>
<dbReference type="GO" id="GO:0005829">
    <property type="term" value="C:cytosol"/>
    <property type="evidence" value="ECO:0000314"/>
    <property type="project" value="HPA"/>
</dbReference>
<dbReference type="GO" id="GO:0043231">
    <property type="term" value="C:intracellular membrane-bounded organelle"/>
    <property type="evidence" value="ECO:0000314"/>
    <property type="project" value="HPA"/>
</dbReference>
<dbReference type="GO" id="GO:0005654">
    <property type="term" value="C:nucleoplasm"/>
    <property type="evidence" value="ECO:0000314"/>
    <property type="project" value="HPA"/>
</dbReference>
<dbReference type="GO" id="GO:0005886">
    <property type="term" value="C:plasma membrane"/>
    <property type="evidence" value="ECO:0000314"/>
    <property type="project" value="HPA"/>
</dbReference>
<dbReference type="GO" id="GO:0005509">
    <property type="term" value="F:calcium ion binding"/>
    <property type="evidence" value="ECO:0007669"/>
    <property type="project" value="InterPro"/>
</dbReference>
<dbReference type="GO" id="GO:0017124">
    <property type="term" value="F:SH3 domain binding"/>
    <property type="evidence" value="ECO:0000353"/>
    <property type="project" value="UniProtKB"/>
</dbReference>
<dbReference type="GO" id="GO:0006897">
    <property type="term" value="P:endocytosis"/>
    <property type="evidence" value="ECO:0000318"/>
    <property type="project" value="GO_Central"/>
</dbReference>
<dbReference type="GO" id="GO:0016197">
    <property type="term" value="P:endosomal transport"/>
    <property type="evidence" value="ECO:0000318"/>
    <property type="project" value="GO_Central"/>
</dbReference>
<dbReference type="CDD" id="cd00052">
    <property type="entry name" value="EH"/>
    <property type="match status" value="1"/>
</dbReference>
<dbReference type="FunFam" id="1.10.238.10:FF:000084">
    <property type="entry name" value="ralBP1-associated Eps domain-containing protein 1 isoform X2"/>
    <property type="match status" value="1"/>
</dbReference>
<dbReference type="FunFam" id="1.10.238.10:FF:000039">
    <property type="entry name" value="RalBP1-associated Eps domain-containing protein 2 isoform 1"/>
    <property type="match status" value="1"/>
</dbReference>
<dbReference type="Gene3D" id="1.10.238.10">
    <property type="entry name" value="EF-hand"/>
    <property type="match status" value="2"/>
</dbReference>
<dbReference type="InterPro" id="IPR011992">
    <property type="entry name" value="EF-hand-dom_pair"/>
</dbReference>
<dbReference type="InterPro" id="IPR018247">
    <property type="entry name" value="EF_Hand_1_Ca_BS"/>
</dbReference>
<dbReference type="InterPro" id="IPR002048">
    <property type="entry name" value="EF_hand_dom"/>
</dbReference>
<dbReference type="InterPro" id="IPR000261">
    <property type="entry name" value="EH_dom"/>
</dbReference>
<dbReference type="PANTHER" id="PTHR11216">
    <property type="entry name" value="EH DOMAIN"/>
    <property type="match status" value="1"/>
</dbReference>
<dbReference type="PANTHER" id="PTHR11216:SF63">
    <property type="entry name" value="RALBP1-ASSOCIATED EPS DOMAIN-CONTAINING PROTEIN 1"/>
    <property type="match status" value="1"/>
</dbReference>
<dbReference type="Pfam" id="PF12763">
    <property type="entry name" value="EH"/>
    <property type="match status" value="2"/>
</dbReference>
<dbReference type="SMART" id="SM00027">
    <property type="entry name" value="EH"/>
    <property type="match status" value="2"/>
</dbReference>
<dbReference type="SUPFAM" id="SSF47473">
    <property type="entry name" value="EF-hand"/>
    <property type="match status" value="2"/>
</dbReference>
<dbReference type="PROSITE" id="PS00018">
    <property type="entry name" value="EF_HAND_1"/>
    <property type="match status" value="1"/>
</dbReference>
<dbReference type="PROSITE" id="PS50222">
    <property type="entry name" value="EF_HAND_2"/>
    <property type="match status" value="1"/>
</dbReference>
<dbReference type="PROSITE" id="PS50031">
    <property type="entry name" value="EH"/>
    <property type="match status" value="2"/>
</dbReference>